<sequence>MAEDGSEEIMFIWCEDCSQYHDSECPELGPVVMVKDSFVLSRARSSLPPNLEIRRLEDGAEGVFAITQLVKRTQFGPFESRRVAKWEKESAFPLKVFQKDGHPVCFDTSNEDDCNWMMLVRPAAEAEHQNLTAYQHGSDVYFTTSRDIPPGTELRVWYAAFYAKKMDKPMLKQAGSGVHAAGTPENSAPVESEPSQWACKVCSATFLELQLLNEHLLGHLEQAKSLPPGSQSEAAAPEKEQDTPRGEPPAVPESENVATKEQKKKPRRGRKPKVSKAEQPLVIVEDKEPTEQVAEIITEVPPDEPVSATPDERIMELVLGKLATTTTDTSSVPKFTHHQNNTITLKRSLILSSRHGIRRKLIKQLGEHKRVYQCNICSKIFQNSSNLSRHVRSHGDKLFKCEECAKLFSRKESLKQHVSYKHSRNEVDGEYRYRCGTCEKTFRIESALEFHNCRTDDKTFQCEMCFRFFSTNSNLSKHKKKHGDKKFACEVCSKMFYRKDVMLDHQRRHLEGVRRVKREDLEAGGENLVRYKKEPSGCPVCGKVFSCRSNMNKHLLTHGDKKYTCEICGRKFFRVDVLRDHIHVHFKDIALMDDHQREEFIGKIGISSEENDDNSDESADSEPHKYSCKRCQLTFGRGKEYLKHIMEVHKEKGYGCSICNRRFALKATYHAHMVIHRENLPDPNVQKYIHPCEICGRIFNSIGNLERHKLIHTGVKSHACEQCGKSFARKDMLKEHMRVHDNVREYLCAECGKGMKTKHALRHHMKLHKGIKEYECKECHRRFAQKVNMLKHCKRHTGIKDFMCELCGKTFSERNTMETHKLIHTVGKQWTCSVCDKKYVTEYMLQKHVQLTHDKVEAQSCQLCGTKVSTRASMSRHMRRKHPEVLAVRIDDLDHLPETTTIDASSIGIVQPELTLEQEDLAEGKHGKAAKRSHKRKQKPEEEAGAPVPEDATFSEYSEKETEFTGSVGDETNSAVQSIQQVVVTLGDPNVTTPSSSVGLTNITVTPITTAAATQFTNLQPVAVGHLTTPERQLQLDNSILTVTFDTVSGSAMLHNRQNDVQIHPQPEASNPQSVAHFINLTTLVNSITPLGSQLSDQHPLTWRAVPQTDVLPPSQPQAPPQQAAQPQVQAEQQQQQMYSY</sequence>
<keyword id="KW-0010">Activator</keyword>
<keyword id="KW-0025">Alternative splicing</keyword>
<keyword id="KW-0217">Developmental protein</keyword>
<keyword id="KW-0238">DNA-binding</keyword>
<keyword id="KW-1017">Isopeptide bond</keyword>
<keyword id="KW-0479">Metal-binding</keyword>
<keyword id="KW-0489">Methyltransferase</keyword>
<keyword id="KW-0539">Nucleus</keyword>
<keyword id="KW-1267">Proteomics identification</keyword>
<keyword id="KW-1185">Reference proteome</keyword>
<keyword id="KW-0677">Repeat</keyword>
<keyword id="KW-0678">Repressor</keyword>
<keyword id="KW-0949">S-adenosyl-L-methionine</keyword>
<keyword id="KW-0804">Transcription</keyword>
<keyword id="KW-0805">Transcription regulation</keyword>
<keyword id="KW-0808">Transferase</keyword>
<keyword id="KW-0832">Ubl conjugation</keyword>
<keyword id="KW-0862">Zinc</keyword>
<keyword id="KW-0863">Zinc-finger</keyword>
<organism>
    <name type="scientific">Homo sapiens</name>
    <name type="common">Human</name>
    <dbReference type="NCBI Taxonomy" id="9606"/>
    <lineage>
        <taxon>Eukaryota</taxon>
        <taxon>Metazoa</taxon>
        <taxon>Chordata</taxon>
        <taxon>Craniata</taxon>
        <taxon>Vertebrata</taxon>
        <taxon>Euteleostomi</taxon>
        <taxon>Mammalia</taxon>
        <taxon>Eutheria</taxon>
        <taxon>Euarchontoglires</taxon>
        <taxon>Primates</taxon>
        <taxon>Haplorrhini</taxon>
        <taxon>Catarrhini</taxon>
        <taxon>Hominidae</taxon>
        <taxon>Homo</taxon>
    </lineage>
</organism>
<feature type="chain" id="PRO_0000047772" description="PR domain zinc finger protein 15">
    <location>
        <begin position="1"/>
        <end position="1141"/>
    </location>
</feature>
<feature type="domain" description="SET" evidence="3">
    <location>
        <begin position="49"/>
        <end position="159"/>
    </location>
</feature>
<feature type="zinc finger region" description="C2H2-type 1" evidence="2">
    <location>
        <begin position="197"/>
        <end position="219"/>
    </location>
</feature>
<feature type="zinc finger region" description="C2H2-type 2" evidence="2">
    <location>
        <begin position="372"/>
        <end position="394"/>
    </location>
</feature>
<feature type="zinc finger region" description="C2H2-type 3" evidence="2">
    <location>
        <begin position="399"/>
        <end position="422"/>
    </location>
</feature>
<feature type="zinc finger region" description="C2H2-type 4" evidence="2">
    <location>
        <begin position="460"/>
        <end position="482"/>
    </location>
</feature>
<feature type="zinc finger region" description="C2H2-type 5" evidence="2">
    <location>
        <begin position="487"/>
        <end position="509"/>
    </location>
</feature>
<feature type="zinc finger region" description="C2H2-type 6" evidence="2">
    <location>
        <begin position="536"/>
        <end position="558"/>
    </location>
</feature>
<feature type="zinc finger region" description="C2H2-type 7" evidence="2">
    <location>
        <begin position="563"/>
        <end position="585"/>
    </location>
</feature>
<feature type="zinc finger region" description="C2H2-type 8" evidence="2">
    <location>
        <begin position="626"/>
        <end position="649"/>
    </location>
</feature>
<feature type="zinc finger region" description="C2H2-type 9" evidence="2">
    <location>
        <begin position="654"/>
        <end position="676"/>
    </location>
</feature>
<feature type="zinc finger region" description="C2H2-type 10" evidence="2">
    <location>
        <begin position="690"/>
        <end position="712"/>
    </location>
</feature>
<feature type="zinc finger region" description="C2H2-type 11" evidence="2">
    <location>
        <begin position="718"/>
        <end position="740"/>
    </location>
</feature>
<feature type="zinc finger region" description="C2H2-type 12" evidence="2">
    <location>
        <begin position="746"/>
        <end position="768"/>
    </location>
</feature>
<feature type="zinc finger region" description="C2H2-type 13" evidence="2">
    <location>
        <begin position="774"/>
        <end position="796"/>
    </location>
</feature>
<feature type="zinc finger region" description="C2H2-type 14" evidence="2">
    <location>
        <begin position="802"/>
        <end position="824"/>
    </location>
</feature>
<feature type="zinc finger region" description="C2H2-type 15" evidence="2">
    <location>
        <begin position="830"/>
        <end position="853"/>
    </location>
</feature>
<feature type="zinc finger region" description="C2H2-type 16" evidence="2">
    <location>
        <begin position="859"/>
        <end position="882"/>
    </location>
</feature>
<feature type="region of interest" description="Disordered" evidence="4">
    <location>
        <begin position="224"/>
        <end position="283"/>
    </location>
</feature>
<feature type="region of interest" description="Disordered" evidence="4">
    <location>
        <begin position="604"/>
        <end position="623"/>
    </location>
</feature>
<feature type="region of interest" description="Disordered" evidence="4">
    <location>
        <begin position="922"/>
        <end position="973"/>
    </location>
</feature>
<feature type="region of interest" description="Disordered" evidence="4">
    <location>
        <begin position="1108"/>
        <end position="1141"/>
    </location>
</feature>
<feature type="compositionally biased region" description="Basic and acidic residues" evidence="4">
    <location>
        <begin position="236"/>
        <end position="245"/>
    </location>
</feature>
<feature type="compositionally biased region" description="Basic residues" evidence="4">
    <location>
        <begin position="262"/>
        <end position="274"/>
    </location>
</feature>
<feature type="compositionally biased region" description="Acidic residues" evidence="4">
    <location>
        <begin position="609"/>
        <end position="620"/>
    </location>
</feature>
<feature type="compositionally biased region" description="Basic residues" evidence="4">
    <location>
        <begin position="927"/>
        <end position="938"/>
    </location>
</feature>
<feature type="compositionally biased region" description="Low complexity" evidence="4">
    <location>
        <begin position="1121"/>
        <end position="1141"/>
    </location>
</feature>
<feature type="cross-link" description="Glycyl lysine isopeptide (Lys-Gly) (interchain with G-Cter in SUMO2)" evidence="12 13">
    <location>
        <position position="517"/>
    </location>
</feature>
<feature type="splice variant" id="VSP_062435" description="In isoform 1.">
    <original>M</original>
    <variation>MPRRRPPASGAAQFPERIATRSPDPIPLCTFQRQPRAAPVQPPCRLFFVTFAGCGHRWRSESKPGWISRSRSGIALRAARPPGSSPPRPAAPRPPPPGGVVAEAPGDVVIPRPRVQPMRVARGGPWTPNPAFREAESWSQIGNQRVSEQLLETSLGNEVSDTEPLSPASAGLRRNPALPPGPFAQNFSWGNQENLPPALGKIANGGGTGAGKAECGYETESHLLEPHEIPLNVNTHKFSDCEFPYEFCTVCFSPFKLLGMSGVEGVWNQHSRSASMHTFLNHSATGIREAGCRKDMPVSEM</variation>
    <location>
        <position position="1"/>
    </location>
</feature>
<feature type="splice variant" id="VSP_062436" description="In isoform 1.">
    <original>A</original>
    <variation>ARSWPASGHVHTQAGQGMRGYEDRDRADPQQLPEAVPAGLVRRLSGQQLPCRSTLTWGRLCHLVAQG</variation>
    <location>
        <position position="43"/>
    </location>
</feature>
<feature type="splice variant" id="VSP_062437" description="In isoform 5.">
    <location>
        <begin position="335"/>
        <end position="354"/>
    </location>
</feature>
<feature type="splice variant" id="VSP_062438" description="In isoform 2.">
    <original>T</original>
    <variation>TGLIAHPGEGGPGGSRLRDLP</variation>
    <location>
        <position position="455"/>
    </location>
</feature>
<feature type="splice variant" id="VSP_062439" description="In isoform 4.">
    <original>DDKTFQCEMCFRFFSTNSNLSKHKKKHGDKKFACEVCSKMFYRKDVMLDHQRRHLEGVRRVKR</original>
    <variation>GLIAHPGEGGPGGSRLRDLPATSPSTRRSTATRSLPVRSAARCSTARTSCWTTSAGTWKECGE</variation>
    <location>
        <begin position="456"/>
        <end position="518"/>
    </location>
</feature>
<feature type="splice variant" id="VSP_062440" description="In isoform 5.">
    <original>DDKTFQCEMCFRFFSTNSNLSKHKKKHGDKKFACEVCSKMFYR</original>
    <variation>ATSPSTRRSTATRSLPVRSAARCSTARTSCWTTSAGTWKECGE</variation>
    <location>
        <begin position="456"/>
        <end position="498"/>
    </location>
</feature>
<feature type="splice variant" id="VSP_062441" description="In isoform 5.">
    <location>
        <begin position="499"/>
        <end position="1141"/>
    </location>
</feature>
<feature type="splice variant" id="VSP_062442" description="In isoform 4.">
    <location>
        <begin position="519"/>
        <end position="1141"/>
    </location>
</feature>
<feature type="sequence variant" id="VAR_014994" description="In dbSNP:rs3850706." evidence="5 6 8">
    <original>S</original>
    <variation>P</variation>
    <location>
        <position position="1115"/>
    </location>
</feature>
<feature type="sequence conflict" description="In Ref. 6; AAL60596." evidence="10" ref="6">
    <original>R</original>
    <variation>G</variation>
    <location>
        <position position="781"/>
    </location>
</feature>
<feature type="sequence conflict" description="In Ref. 6; AAL60596." evidence="10" ref="6">
    <original>D</original>
    <variation>I</variation>
    <location>
        <position position="801"/>
    </location>
</feature>
<comment type="function">
    <text evidence="1 7">Sequence-specific DNA-binding transcriptional regulator. Plays a role as a molecular node in a transcriptional network regulating embryonic development and cell fate decision. Stimulates the expression of upstream key transcriptional activators and repressors of the Wnt/beta-catenin and MAPK/ERK pathways, respectively, that are essential for naive pluripotency and self-renewal maintenance of embryonic stem cells (ESCs). Specifically promotes SPRY1 and RSPO1 transcription activation through recognition and direct binding of a specific DNA sequence in their promoter regions. Involved in early embryo development (By similarity). Also plays a role in induced pluripotent stem cells (iPSCs) reprogramming (PubMed:28740264).</text>
</comment>
<comment type="subcellular location">
    <subcellularLocation>
        <location evidence="6">Nucleus</location>
    </subcellularLocation>
</comment>
<comment type="alternative products">
    <event type="alternative splicing"/>
    <isoform>
        <id>P57071-7</id>
        <name>6</name>
        <name evidence="9">ZNF298a</name>
        <sequence type="displayed"/>
    </isoform>
    <isoform>
        <id>P57071-1</id>
        <name>1</name>
        <sequence type="described" ref="VSP_062435 VSP_062436"/>
    </isoform>
    <isoform>
        <id>P57071-2</id>
        <name>2</name>
        <name evidence="9">ZNF298b</name>
        <sequence type="described" ref="VSP_062438"/>
    </isoform>
    <isoform>
        <id>P57071-5</id>
        <name>4</name>
        <name evidence="9">ZNF298c</name>
        <sequence type="described" ref="VSP_062439 VSP_062442"/>
    </isoform>
    <isoform>
        <id>P57071-6</id>
        <name>5</name>
        <name evidence="9">ZNF298d</name>
        <sequence type="described" ref="VSP_062437 VSP_062440 VSP_062441"/>
    </isoform>
</comment>
<comment type="tissue specificity">
    <text evidence="6">Detected in all tissues examined.</text>
</comment>
<comment type="developmental stage">
    <text evidence="6">Expressed in fetal tissues.</text>
</comment>
<comment type="miscellaneous">
    <molecule>Isoform 4</molecule>
    <text evidence="10">May be produced at very low levels due to a premature stop codon in the mRNA, leading to nonsense-mediated mRNA decay.</text>
</comment>
<comment type="miscellaneous">
    <molecule>Isoform 5</molecule>
    <text evidence="10">May be produced at very low levels due to a premature stop codon in the mRNA, leading to nonsense-mediated mRNA decay.</text>
</comment>
<comment type="similarity">
    <text evidence="3">Belongs to the class V-like SAM-binding methyltransferase superfamily.</text>
</comment>
<comment type="sequence caution" evidence="10">
    <conflict type="erroneous initiation">
        <sequence resource="EMBL-CDS" id="AAF78093"/>
    </conflict>
    <text>Extended N-terminus.</text>
</comment>
<comment type="sequence caution" evidence="10">
    <conflict type="erroneous initiation">
        <sequence resource="EMBL-CDS" id="AAL60596"/>
    </conflict>
    <text>Truncated N-terminus.</text>
</comment>
<comment type="sequence caution" evidence="10">
    <conflict type="erroneous translation">
        <sequence resource="EMBL-CDS" id="AAM53515"/>
    </conflict>
    <text>Erroneous CDS prediction.</text>
</comment>
<comment type="sequence caution" evidence="10">
    <conflict type="erroneous translation">
        <sequence resource="EMBL-CDS" id="AAM53516"/>
    </conflict>
    <text>Erroneous CDS prediction.</text>
</comment>
<comment type="sequence caution" evidence="10">
    <conflict type="erroneous gene model prediction">
        <sequence resource="EMBL-CDS" id="BAA95527"/>
    </conflict>
</comment>
<comment type="sequence caution" evidence="10">
    <conflict type="erroneous translation">
        <sequence resource="EMBL-CDS" id="BAD99018"/>
    </conflict>
    <text>Erroneous CDS prediction.</text>
</comment>
<comment type="sequence caution" evidence="10">
    <conflict type="erroneous translation">
        <sequence resource="EMBL-CDS" id="BAD99020"/>
    </conflict>
    <text>Erroneous CDS prediction.</text>
</comment>
<accession>P57071</accession>
<accession>E9PDJ6</accession>
<accession>E9PF37</accession>
<accession>E9PGL3</accession>
<accession>Q4W8S0</accession>
<accession>Q4W8S3</accession>
<accession>Q4W8S4</accession>
<accession>Q4W8S5</accession>
<accession>Q8N0X3</accession>
<accession>Q8NEX0</accession>
<accession>Q9NQV3</accession>
<name>PRD15_HUMAN</name>
<dbReference type="EC" id="2.1.1.-" evidence="10"/>
<dbReference type="EMBL" id="AY078498">
    <property type="protein sequence ID" value="AAL85487.2"/>
    <property type="molecule type" value="mRNA"/>
</dbReference>
<dbReference type="EMBL" id="AB051812">
    <property type="protein sequence ID" value="BAD99015.1"/>
    <property type="molecule type" value="mRNA"/>
</dbReference>
<dbReference type="EMBL" id="AB051813">
    <property type="protein sequence ID" value="BAD99016.1"/>
    <property type="molecule type" value="mRNA"/>
</dbReference>
<dbReference type="EMBL" id="AB051814">
    <property type="protein sequence ID" value="BAD99017.1"/>
    <property type="molecule type" value="mRNA"/>
</dbReference>
<dbReference type="EMBL" id="AB051814">
    <property type="protein sequence ID" value="BAD99018.1"/>
    <property type="status" value="ALT_SEQ"/>
    <property type="molecule type" value="mRNA"/>
</dbReference>
<dbReference type="EMBL" id="AB051815">
    <property type="protein sequence ID" value="BAD99020.1"/>
    <property type="status" value="ALT_SEQ"/>
    <property type="molecule type" value="mRNA"/>
</dbReference>
<dbReference type="EMBL" id="AB126081">
    <property type="status" value="NOT_ANNOTATED_CDS"/>
    <property type="molecule type" value="Genomic_DNA"/>
</dbReference>
<dbReference type="EMBL" id="AP001580">
    <property type="status" value="NOT_ANNOTATED_CDS"/>
    <property type="molecule type" value="Genomic_DNA"/>
</dbReference>
<dbReference type="EMBL" id="AP001618">
    <property type="status" value="NOT_ANNOTATED_CDS"/>
    <property type="molecule type" value="Genomic_DNA"/>
</dbReference>
<dbReference type="EMBL" id="AP001619">
    <property type="status" value="NOT_ANNOTATED_CDS"/>
    <property type="molecule type" value="Genomic_DNA"/>
</dbReference>
<dbReference type="EMBL" id="AP001745">
    <property type="protein sequence ID" value="BAA95527.1"/>
    <property type="status" value="ALT_SEQ"/>
    <property type="molecule type" value="Genomic_DNA"/>
</dbReference>
<dbReference type="EMBL" id="AP002955">
    <property type="status" value="NOT_ANNOTATED_CDS"/>
    <property type="molecule type" value="Genomic_DNA"/>
</dbReference>
<dbReference type="EMBL" id="CH471079">
    <property type="protein sequence ID" value="EAX09585.1"/>
    <property type="molecule type" value="Genomic_DNA"/>
</dbReference>
<dbReference type="EMBL" id="AF276513">
    <property type="protein sequence ID" value="AAF78093.1"/>
    <property type="status" value="ALT_INIT"/>
    <property type="molecule type" value="mRNA"/>
</dbReference>
<dbReference type="EMBL" id="AY063456">
    <property type="protein sequence ID" value="AAL60596.1"/>
    <property type="status" value="ALT_INIT"/>
    <property type="molecule type" value="mRNA"/>
</dbReference>
<dbReference type="EMBL" id="AF426259">
    <property type="protein sequence ID" value="AAM53515.1"/>
    <property type="status" value="ALT_SEQ"/>
    <property type="molecule type" value="mRNA"/>
</dbReference>
<dbReference type="EMBL" id="AF426260">
    <property type="protein sequence ID" value="AAM53516.1"/>
    <property type="status" value="ALT_SEQ"/>
    <property type="molecule type" value="mRNA"/>
</dbReference>
<dbReference type="CCDS" id="CCDS42932.2">
    <molecule id="P57071-7"/>
</dbReference>
<dbReference type="CCDS" id="CCDS63370.2">
    <molecule id="P57071-2"/>
</dbReference>
<dbReference type="RefSeq" id="NP_001035514.2">
    <molecule id="P57071-7"/>
    <property type="nucleotide sequence ID" value="NM_001040424.3"/>
</dbReference>
<dbReference type="RefSeq" id="NP_001269863.2">
    <molecule id="P57071-2"/>
    <property type="nucleotide sequence ID" value="NM_001282934.2"/>
</dbReference>
<dbReference type="RefSeq" id="NP_071398.3">
    <property type="nucleotide sequence ID" value="NM_022115.4"/>
</dbReference>
<dbReference type="RefSeq" id="XP_011527977.1">
    <molecule id="P57071-2"/>
    <property type="nucleotide sequence ID" value="XM_011529675.2"/>
</dbReference>
<dbReference type="RefSeq" id="XP_011527978.1">
    <molecule id="P57071-2"/>
    <property type="nucleotide sequence ID" value="XM_011529676.3"/>
</dbReference>
<dbReference type="RefSeq" id="XP_011527979.1">
    <molecule id="P57071-2"/>
    <property type="nucleotide sequence ID" value="XM_011529677.3"/>
</dbReference>
<dbReference type="RefSeq" id="XP_011527980.1">
    <molecule id="P57071-2"/>
    <property type="nucleotide sequence ID" value="XM_011529678.3"/>
</dbReference>
<dbReference type="RefSeq" id="XP_011527981.1">
    <molecule id="P57071-2"/>
    <property type="nucleotide sequence ID" value="XM_011529679.3"/>
</dbReference>
<dbReference type="RefSeq" id="XP_016883914.1">
    <molecule id="P57071-7"/>
    <property type="nucleotide sequence ID" value="XM_017028425.2"/>
</dbReference>
<dbReference type="RefSeq" id="XP_016883915.1">
    <property type="nucleotide sequence ID" value="XM_017028426.1"/>
</dbReference>
<dbReference type="RefSeq" id="XP_047296892.1">
    <molecule id="P57071-7"/>
    <property type="nucleotide sequence ID" value="XM_047440936.1"/>
</dbReference>
<dbReference type="SMR" id="P57071"/>
<dbReference type="BioGRID" id="122024">
    <property type="interactions" value="82"/>
</dbReference>
<dbReference type="FunCoup" id="P57071">
    <property type="interactions" value="3222"/>
</dbReference>
<dbReference type="IntAct" id="P57071">
    <property type="interactions" value="67"/>
</dbReference>
<dbReference type="MINT" id="P57071"/>
<dbReference type="STRING" id="9606.ENSP00000269844"/>
<dbReference type="GlyGen" id="P57071">
    <property type="glycosylation" value="3 sites, 1 N-linked glycan (1 site), 1 O-linked glycan (1 site)"/>
</dbReference>
<dbReference type="iPTMnet" id="P57071"/>
<dbReference type="PhosphoSitePlus" id="P57071"/>
<dbReference type="BioMuta" id="PRDM15"/>
<dbReference type="DMDM" id="118572696"/>
<dbReference type="jPOST" id="P57071"/>
<dbReference type="MassIVE" id="P57071"/>
<dbReference type="PaxDb" id="9606-ENSP00000269844"/>
<dbReference type="PeptideAtlas" id="P57071"/>
<dbReference type="ProteomicsDB" id="19680"/>
<dbReference type="ProteomicsDB" id="20018"/>
<dbReference type="ProteomicsDB" id="20339"/>
<dbReference type="ProteomicsDB" id="56980">
    <molecule id="P57071-1"/>
</dbReference>
<dbReference type="Pumba" id="P57071"/>
<dbReference type="Antibodypedia" id="9262">
    <property type="antibodies" value="102 antibodies from 20 providers"/>
</dbReference>
<dbReference type="DNASU" id="63977"/>
<dbReference type="Ensembl" id="ENST00000398548.6">
    <molecule id="P57071-7"/>
    <property type="protein sequence ID" value="ENSP00000381556.2"/>
    <property type="gene ID" value="ENSG00000141956.14"/>
</dbReference>
<dbReference type="Ensembl" id="ENST00000422911.6">
    <molecule id="P57071-2"/>
    <property type="protein sequence ID" value="ENSP00000408592.2"/>
    <property type="gene ID" value="ENSG00000141956.14"/>
</dbReference>
<dbReference type="Ensembl" id="ENST00000441787.5">
    <molecule id="P57071-6"/>
    <property type="protein sequence ID" value="ENSP00000387958.1"/>
    <property type="gene ID" value="ENSG00000141956.14"/>
</dbReference>
<dbReference type="Ensembl" id="ENST00000447016.6">
    <molecule id="P57071-7"/>
    <property type="protein sequence ID" value="ENSP00000431410.1"/>
    <property type="gene ID" value="ENSG00000141956.14"/>
</dbReference>
<dbReference type="Ensembl" id="ENST00000449395.6">
    <molecule id="P57071-5"/>
    <property type="protein sequence ID" value="ENSP00000396943.2"/>
    <property type="gene ID" value="ENSG00000141956.14"/>
</dbReference>
<dbReference type="GeneID" id="63977"/>
<dbReference type="KEGG" id="hsa:63977"/>
<dbReference type="MANE-Select" id="ENST00000398548.6">
    <property type="protein sequence ID" value="ENSP00000381556.2"/>
    <property type="RefSeq nucleotide sequence ID" value="NM_001040424.3"/>
    <property type="RefSeq protein sequence ID" value="NP_001035514.2"/>
</dbReference>
<dbReference type="UCSC" id="uc002yzo.4">
    <molecule id="P57071-7"/>
    <property type="organism name" value="human"/>
</dbReference>
<dbReference type="AGR" id="HGNC:13999"/>
<dbReference type="CTD" id="63977"/>
<dbReference type="DisGeNET" id="63977"/>
<dbReference type="GeneCards" id="PRDM15"/>
<dbReference type="HGNC" id="HGNC:13999">
    <property type="gene designation" value="PRDM15"/>
</dbReference>
<dbReference type="HPA" id="ENSG00000141956">
    <property type="expression patterns" value="Low tissue specificity"/>
</dbReference>
<dbReference type="MIM" id="617692">
    <property type="type" value="gene"/>
</dbReference>
<dbReference type="neXtProt" id="NX_P57071"/>
<dbReference type="OpenTargets" id="ENSG00000141956"/>
<dbReference type="PharmGKB" id="PA33713"/>
<dbReference type="VEuPathDB" id="HostDB:ENSG00000141956"/>
<dbReference type="eggNOG" id="KOG1721">
    <property type="taxonomic scope" value="Eukaryota"/>
</dbReference>
<dbReference type="GeneTree" id="ENSGT00940000157890"/>
<dbReference type="InParanoid" id="P57071"/>
<dbReference type="OrthoDB" id="4748970at2759"/>
<dbReference type="PAN-GO" id="P57071">
    <property type="GO annotations" value="4 GO annotations based on evolutionary models"/>
</dbReference>
<dbReference type="PhylomeDB" id="P57071"/>
<dbReference type="TreeFam" id="TF331419"/>
<dbReference type="PathwayCommons" id="P57071"/>
<dbReference type="SignaLink" id="P57071"/>
<dbReference type="BioGRID-ORCS" id="63977">
    <property type="hits" value="28 hits in 1180 CRISPR screens"/>
</dbReference>
<dbReference type="ChiTaRS" id="PRDM15">
    <property type="organism name" value="human"/>
</dbReference>
<dbReference type="GenomeRNAi" id="63977"/>
<dbReference type="Pharos" id="P57071">
    <property type="development level" value="Tbio"/>
</dbReference>
<dbReference type="PRO" id="PR:P57071"/>
<dbReference type="Proteomes" id="UP000005640">
    <property type="component" value="Chromosome 21"/>
</dbReference>
<dbReference type="RNAct" id="P57071">
    <property type="molecule type" value="protein"/>
</dbReference>
<dbReference type="Bgee" id="ENSG00000141956">
    <property type="expression patterns" value="Expressed in sural nerve and 152 other cell types or tissues"/>
</dbReference>
<dbReference type="ExpressionAtlas" id="P57071">
    <property type="expression patterns" value="baseline and differential"/>
</dbReference>
<dbReference type="GO" id="GO:0016604">
    <property type="term" value="C:nuclear body"/>
    <property type="evidence" value="ECO:0000314"/>
    <property type="project" value="HPA"/>
</dbReference>
<dbReference type="GO" id="GO:0005654">
    <property type="term" value="C:nucleoplasm"/>
    <property type="evidence" value="ECO:0000314"/>
    <property type="project" value="HPA"/>
</dbReference>
<dbReference type="GO" id="GO:0005634">
    <property type="term" value="C:nucleus"/>
    <property type="evidence" value="ECO:0000314"/>
    <property type="project" value="UniProtKB"/>
</dbReference>
<dbReference type="GO" id="GO:0001228">
    <property type="term" value="F:DNA-binding transcription activator activity, RNA polymerase II-specific"/>
    <property type="evidence" value="ECO:0000318"/>
    <property type="project" value="GO_Central"/>
</dbReference>
<dbReference type="GO" id="GO:0008168">
    <property type="term" value="F:methyltransferase activity"/>
    <property type="evidence" value="ECO:0007669"/>
    <property type="project" value="UniProtKB-KW"/>
</dbReference>
<dbReference type="GO" id="GO:1990841">
    <property type="term" value="F:promoter-specific chromatin binding"/>
    <property type="evidence" value="ECO:0000250"/>
    <property type="project" value="UniProtKB"/>
</dbReference>
<dbReference type="GO" id="GO:0000978">
    <property type="term" value="F:RNA polymerase II cis-regulatory region sequence-specific DNA binding"/>
    <property type="evidence" value="ECO:0000250"/>
    <property type="project" value="UniProtKB"/>
</dbReference>
<dbReference type="GO" id="GO:0008270">
    <property type="term" value="F:zinc ion binding"/>
    <property type="evidence" value="ECO:0007669"/>
    <property type="project" value="UniProtKB-KW"/>
</dbReference>
<dbReference type="GO" id="GO:0032259">
    <property type="term" value="P:methylation"/>
    <property type="evidence" value="ECO:0007669"/>
    <property type="project" value="UniProtKB-KW"/>
</dbReference>
<dbReference type="GO" id="GO:0043409">
    <property type="term" value="P:negative regulation of MAPK cascade"/>
    <property type="evidence" value="ECO:0000250"/>
    <property type="project" value="UniProtKB"/>
</dbReference>
<dbReference type="GO" id="GO:0090263">
    <property type="term" value="P:positive regulation of canonical Wnt signaling pathway"/>
    <property type="evidence" value="ECO:0000250"/>
    <property type="project" value="UniProtKB"/>
</dbReference>
<dbReference type="GO" id="GO:0045944">
    <property type="term" value="P:positive regulation of transcription by RNA polymerase II"/>
    <property type="evidence" value="ECO:0000250"/>
    <property type="project" value="UniProtKB"/>
</dbReference>
<dbReference type="GO" id="GO:2000035">
    <property type="term" value="P:regulation of stem cell division"/>
    <property type="evidence" value="ECO:0000250"/>
    <property type="project" value="UniProtKB"/>
</dbReference>
<dbReference type="GO" id="GO:0006357">
    <property type="term" value="P:regulation of transcription by RNA polymerase II"/>
    <property type="evidence" value="ECO:0000318"/>
    <property type="project" value="GO_Central"/>
</dbReference>
<dbReference type="CDD" id="cd19199">
    <property type="entry name" value="PR-SET_PRDM15"/>
    <property type="match status" value="1"/>
</dbReference>
<dbReference type="FunFam" id="3.30.160.60:FF:004086">
    <property type="match status" value="1"/>
</dbReference>
<dbReference type="FunFam" id="3.30.160.60:FF:005266">
    <property type="match status" value="1"/>
</dbReference>
<dbReference type="FunFam" id="2.170.270.10:FF:000007">
    <property type="entry name" value="PR domain zinc finger protein 10"/>
    <property type="match status" value="1"/>
</dbReference>
<dbReference type="FunFam" id="3.30.160.60:FF:000593">
    <property type="entry name" value="PR domain zinc finger protein 15"/>
    <property type="match status" value="1"/>
</dbReference>
<dbReference type="FunFam" id="3.30.160.60:FF:000603">
    <property type="entry name" value="PR domain zinc finger protein 15"/>
    <property type="match status" value="1"/>
</dbReference>
<dbReference type="FunFam" id="3.30.160.60:FF:000937">
    <property type="entry name" value="PR domain zinc finger protein 15"/>
    <property type="match status" value="1"/>
</dbReference>
<dbReference type="FunFam" id="3.30.160.60:FF:002330">
    <property type="entry name" value="PR domain zinc finger protein 15"/>
    <property type="match status" value="1"/>
</dbReference>
<dbReference type="FunFam" id="3.30.160.60:FF:003229">
    <property type="entry name" value="PR/SET domain 15"/>
    <property type="match status" value="1"/>
</dbReference>
<dbReference type="Gene3D" id="3.30.160.60">
    <property type="entry name" value="Classic Zinc Finger"/>
    <property type="match status" value="11"/>
</dbReference>
<dbReference type="Gene3D" id="2.170.270.10">
    <property type="entry name" value="SET domain"/>
    <property type="match status" value="1"/>
</dbReference>
<dbReference type="InterPro" id="IPR044409">
    <property type="entry name" value="PRDM15_PR-SET"/>
</dbReference>
<dbReference type="InterPro" id="IPR001214">
    <property type="entry name" value="SET_dom"/>
</dbReference>
<dbReference type="InterPro" id="IPR046341">
    <property type="entry name" value="SET_dom_sf"/>
</dbReference>
<dbReference type="InterPro" id="IPR036236">
    <property type="entry name" value="Znf_C2H2_sf"/>
</dbReference>
<dbReference type="InterPro" id="IPR013087">
    <property type="entry name" value="Znf_C2H2_type"/>
</dbReference>
<dbReference type="PANTHER" id="PTHR24390:SF159">
    <property type="entry name" value="GROWTH FACTOR INDEPENDENT 1 TRANSCRIPTIONAL REPRESSOR"/>
    <property type="match status" value="1"/>
</dbReference>
<dbReference type="PANTHER" id="PTHR24390">
    <property type="entry name" value="ZINC FINGER PROTEIN"/>
    <property type="match status" value="1"/>
</dbReference>
<dbReference type="Pfam" id="PF21549">
    <property type="entry name" value="PRDM2_PR"/>
    <property type="match status" value="1"/>
</dbReference>
<dbReference type="Pfam" id="PF00096">
    <property type="entry name" value="zf-C2H2"/>
    <property type="match status" value="6"/>
</dbReference>
<dbReference type="Pfam" id="PF13894">
    <property type="entry name" value="zf-C2H2_4"/>
    <property type="match status" value="1"/>
</dbReference>
<dbReference type="Pfam" id="PF23573">
    <property type="entry name" value="zf-C2H2_PRDM15"/>
    <property type="match status" value="1"/>
</dbReference>
<dbReference type="SMART" id="SM00355">
    <property type="entry name" value="ZnF_C2H2"/>
    <property type="match status" value="17"/>
</dbReference>
<dbReference type="SUPFAM" id="SSF57667">
    <property type="entry name" value="beta-beta-alpha zinc fingers"/>
    <property type="match status" value="8"/>
</dbReference>
<dbReference type="PROSITE" id="PS50280">
    <property type="entry name" value="SET"/>
    <property type="match status" value="1"/>
</dbReference>
<dbReference type="PROSITE" id="PS00028">
    <property type="entry name" value="ZINC_FINGER_C2H2_1"/>
    <property type="match status" value="16"/>
</dbReference>
<dbReference type="PROSITE" id="PS50157">
    <property type="entry name" value="ZINC_FINGER_C2H2_2"/>
    <property type="match status" value="13"/>
</dbReference>
<proteinExistence type="evidence at protein level"/>
<gene>
    <name evidence="11" type="primary">PRDM15</name>
    <name evidence="11" type="synonym">C21orf83</name>
    <name evidence="11" type="synonym">ZNF298</name>
</gene>
<reference key="1">
    <citation type="journal article" date="2002" name="Genomics">
        <title>Annotation of human chromosome 21 for relevance to Down syndrome: gene structure and expression analysis.</title>
        <authorList>
            <person name="Gardiner K."/>
            <person name="Slavov D."/>
            <person name="Bechtel L."/>
            <person name="Davisson M."/>
        </authorList>
    </citation>
    <scope>NUCLEOTIDE SEQUENCE [MRNA] (ISOFORM 1)</scope>
</reference>
<reference key="2">
    <citation type="journal article" date="2005" name="Biochem. Biophys. Res. Commun.">
        <title>Identification of a novel zinc finger protein gene (ZNF298) in the GAP2 of human chromosome 21q.</title>
        <authorList>
            <person name="Shibuya K."/>
            <person name="Kudoh J."/>
            <person name="Okui M."/>
            <person name="Shimizu N."/>
        </authorList>
    </citation>
    <scope>NUCLEOTIDE SEQUENCE [MRNA] (ISOFORMS 2; 4; 5; 6)</scope>
    <scope>VARIANT PRO-1115</scope>
    <scope>SUBCELLULAR LOCATION</scope>
    <scope>TISSUE SPECIFICITY</scope>
    <scope>DEVELOPMENTAL STAGE</scope>
    <source>
        <tissue>Thymus</tissue>
    </source>
</reference>
<reference key="3">
    <citation type="journal article" date="2000" name="Nature">
        <title>The DNA sequence of human chromosome 21.</title>
        <authorList>
            <person name="Hattori M."/>
            <person name="Fujiyama A."/>
            <person name="Taylor T.D."/>
            <person name="Watanabe H."/>
            <person name="Yada T."/>
            <person name="Park H.-S."/>
            <person name="Toyoda A."/>
            <person name="Ishii K."/>
            <person name="Totoki Y."/>
            <person name="Choi D.-K."/>
            <person name="Groner Y."/>
            <person name="Soeda E."/>
            <person name="Ohki M."/>
            <person name="Takagi T."/>
            <person name="Sakaki Y."/>
            <person name="Taudien S."/>
            <person name="Blechschmidt K."/>
            <person name="Polley A."/>
            <person name="Menzel U."/>
            <person name="Delabar J."/>
            <person name="Kumpf K."/>
            <person name="Lehmann R."/>
            <person name="Patterson D."/>
            <person name="Reichwald K."/>
            <person name="Rump A."/>
            <person name="Schillhabel M."/>
            <person name="Schudy A."/>
            <person name="Zimmermann W."/>
            <person name="Rosenthal A."/>
            <person name="Kudoh J."/>
            <person name="Shibuya K."/>
            <person name="Kawasaki K."/>
            <person name="Asakawa S."/>
            <person name="Shintani A."/>
            <person name="Sasaki T."/>
            <person name="Nagamine K."/>
            <person name="Mitsuyama S."/>
            <person name="Antonarakis S.E."/>
            <person name="Minoshima S."/>
            <person name="Shimizu N."/>
            <person name="Nordsiek G."/>
            <person name="Hornischer K."/>
            <person name="Brandt P."/>
            <person name="Scharfe M."/>
            <person name="Schoen O."/>
            <person name="Desario A."/>
            <person name="Reichelt J."/>
            <person name="Kauer G."/>
            <person name="Bloecker H."/>
            <person name="Ramser J."/>
            <person name="Beck A."/>
            <person name="Klages S."/>
            <person name="Hennig S."/>
            <person name="Riesselmann L."/>
            <person name="Dagand E."/>
            <person name="Wehrmeyer S."/>
            <person name="Borzym K."/>
            <person name="Gardiner K."/>
            <person name="Nizetic D."/>
            <person name="Francis F."/>
            <person name="Lehrach H."/>
            <person name="Reinhardt R."/>
            <person name="Yaspo M.-L."/>
        </authorList>
    </citation>
    <scope>NUCLEOTIDE SEQUENCE [LARGE SCALE GENOMIC DNA]</scope>
</reference>
<reference key="4">
    <citation type="submission" date="2005-09" db="EMBL/GenBank/DDBJ databases">
        <authorList>
            <person name="Mural R.J."/>
            <person name="Istrail S."/>
            <person name="Sutton G.G."/>
            <person name="Florea L."/>
            <person name="Halpern A.L."/>
            <person name="Mobarry C.M."/>
            <person name="Lippert R."/>
            <person name="Walenz B."/>
            <person name="Shatkay H."/>
            <person name="Dew I."/>
            <person name="Miller J.R."/>
            <person name="Flanigan M.J."/>
            <person name="Edwards N.J."/>
            <person name="Bolanos R."/>
            <person name="Fasulo D."/>
            <person name="Halldorsson B.V."/>
            <person name="Hannenhalli S."/>
            <person name="Turner R."/>
            <person name="Yooseph S."/>
            <person name="Lu F."/>
            <person name="Nusskern D.R."/>
            <person name="Shue B.C."/>
            <person name="Zheng X.H."/>
            <person name="Zhong F."/>
            <person name="Delcher A.L."/>
            <person name="Huson D.H."/>
            <person name="Kravitz S.A."/>
            <person name="Mouchard L."/>
            <person name="Reinert K."/>
            <person name="Remington K.A."/>
            <person name="Clark A.G."/>
            <person name="Waterman M.S."/>
            <person name="Eichler E.E."/>
            <person name="Adams M.D."/>
            <person name="Hunkapiller M.W."/>
            <person name="Myers E.W."/>
            <person name="Venter J.C."/>
        </authorList>
    </citation>
    <scope>NUCLEOTIDE SEQUENCE [LARGE SCALE GENOMIC DNA]</scope>
    <scope>VARIANT PRO-1115</scope>
</reference>
<reference key="5">
    <citation type="submission" date="2000-06" db="EMBL/GenBank/DDBJ databases">
        <title>A family of novel PR-domain (PRDM) genes as candidate tumor suppressors.</title>
        <authorList>
            <person name="Yang X.-H."/>
            <person name="Huang S."/>
        </authorList>
    </citation>
    <scope>NUCLEOTIDE SEQUENCE [MRNA] OF 1-585 (ISOFORM 6)</scope>
</reference>
<reference key="6">
    <citation type="journal article" date="2002" name="Genomics">
        <title>Nineteen additional unpredicted transcripts from human chromosome 21.</title>
        <authorList>
            <person name="Reymond A."/>
            <person name="Camargo A.A."/>
            <person name="Deutsch S."/>
            <person name="Stevenson B.J."/>
            <person name="Parmigiani R.B."/>
            <person name="Ucla C."/>
            <person name="Bettoni F."/>
            <person name="Rossier C."/>
            <person name="Lyle R."/>
            <person name="Guipponi M."/>
            <person name="de Souza S."/>
            <person name="Iseli C."/>
            <person name="Jongeneel C.V."/>
            <person name="Bucher P."/>
            <person name="Simpson A.J.G."/>
            <person name="Antonarakis S.E."/>
        </authorList>
    </citation>
    <scope>NUCLEOTIDE SEQUENCE [MRNA] OF 770-1141 (ISOFORMS 1/2/6)</scope>
    <scope>VARIANT PRO-1115</scope>
</reference>
<reference key="7">
    <citation type="journal article" date="2015" name="Mol. Cell. Proteomics">
        <title>System-wide analysis of SUMOylation dynamics in response to replication stress reveals novel small ubiquitin-like modified target proteins and acceptor lysines relevant for genome stability.</title>
        <authorList>
            <person name="Xiao Z."/>
            <person name="Chang J.G."/>
            <person name="Hendriks I.A."/>
            <person name="Sigurdsson J.O."/>
            <person name="Olsen J.V."/>
            <person name="Vertegaal A.C."/>
        </authorList>
    </citation>
    <scope>SUMOYLATION [LARGE SCALE ANALYSIS] AT LYS-517</scope>
    <scope>IDENTIFICATION BY MASS SPECTROMETRY [LARGE SCALE ANALYSIS]</scope>
</reference>
<reference key="8">
    <citation type="journal article" date="2017" name="Nat. Genet.">
        <title>PRDM15 safeguards naive pluripotency by transcriptionally regulating WNT and MAPK-ERK signaling.</title>
        <authorList>
            <person name="Mzoughi S."/>
            <person name="Zhang J."/>
            <person name="Hequet D."/>
            <person name="Teo S.X."/>
            <person name="Fang H."/>
            <person name="Xing Q.R."/>
            <person name="Bezzi M."/>
            <person name="Seah M.K.Y."/>
            <person name="Ong S.L.M."/>
            <person name="Shin E.M."/>
            <person name="Wollmann H."/>
            <person name="Wong E.S.M."/>
            <person name="Al-Haddawi M."/>
            <person name="Stewart C.L."/>
            <person name="Tergaonkar V."/>
            <person name="Loh Y.H."/>
            <person name="Dunn N.R."/>
            <person name="Messerschmidt D.M."/>
            <person name="Guccione E."/>
        </authorList>
    </citation>
    <scope>FUNCTION</scope>
</reference>
<reference key="9">
    <citation type="journal article" date="2017" name="Nat. Struct. Mol. Biol.">
        <title>Site-specific mapping of the human SUMO proteome reveals co-modification with phosphorylation.</title>
        <authorList>
            <person name="Hendriks I.A."/>
            <person name="Lyon D."/>
            <person name="Young C."/>
            <person name="Jensen L.J."/>
            <person name="Vertegaal A.C."/>
            <person name="Nielsen M.L."/>
        </authorList>
    </citation>
    <scope>SUMOYLATION [LARGE SCALE ANALYSIS] AT LYS-517</scope>
    <scope>IDENTIFICATION BY MASS SPECTROMETRY [LARGE SCALE ANALYSIS]</scope>
</reference>
<protein>
    <recommendedName>
        <fullName evidence="10">PR domain zinc finger protein 15</fullName>
        <ecNumber evidence="10">2.1.1.-</ecNumber>
    </recommendedName>
    <alternativeName>
        <fullName evidence="10">PR domain-containing protein 15</fullName>
    </alternativeName>
    <alternativeName>
        <fullName>Zinc finger protein 298</fullName>
    </alternativeName>
</protein>
<evidence type="ECO:0000250" key="1">
    <source>
        <dbReference type="UniProtKB" id="E9Q8T2"/>
    </source>
</evidence>
<evidence type="ECO:0000255" key="2">
    <source>
        <dbReference type="PROSITE-ProRule" id="PRU00042"/>
    </source>
</evidence>
<evidence type="ECO:0000255" key="3">
    <source>
        <dbReference type="PROSITE-ProRule" id="PRU00190"/>
    </source>
</evidence>
<evidence type="ECO:0000256" key="4">
    <source>
        <dbReference type="SAM" id="MobiDB-lite"/>
    </source>
</evidence>
<evidence type="ECO:0000269" key="5">
    <source>
    </source>
</evidence>
<evidence type="ECO:0000269" key="6">
    <source>
    </source>
</evidence>
<evidence type="ECO:0000269" key="7">
    <source>
    </source>
</evidence>
<evidence type="ECO:0000269" key="8">
    <source ref="4"/>
</evidence>
<evidence type="ECO:0000303" key="9">
    <source>
    </source>
</evidence>
<evidence type="ECO:0000305" key="10"/>
<evidence type="ECO:0000312" key="11">
    <source>
        <dbReference type="HGNC" id="HGNC:13999"/>
    </source>
</evidence>
<evidence type="ECO:0007744" key="12">
    <source>
    </source>
</evidence>
<evidence type="ECO:0007744" key="13">
    <source>
    </source>
</evidence>